<evidence type="ECO:0000250" key="1">
    <source>
        <dbReference type="UniProtKB" id="P00785"/>
    </source>
</evidence>
<evidence type="ECO:0000250" key="2">
    <source>
        <dbReference type="UniProtKB" id="P80884"/>
    </source>
</evidence>
<evidence type="ECO:0000250" key="3">
    <source>
        <dbReference type="UniProtKB" id="P84346"/>
    </source>
</evidence>
<evidence type="ECO:0000255" key="4"/>
<evidence type="ECO:0000255" key="5">
    <source>
        <dbReference type="PROSITE-ProRule" id="PRU00498"/>
    </source>
</evidence>
<evidence type="ECO:0000255" key="6">
    <source>
        <dbReference type="PROSITE-ProRule" id="PRU10088"/>
    </source>
</evidence>
<evidence type="ECO:0000255" key="7">
    <source>
        <dbReference type="PROSITE-ProRule" id="PRU10089"/>
    </source>
</evidence>
<evidence type="ECO:0000255" key="8">
    <source>
        <dbReference type="PROSITE-ProRule" id="PRU10090"/>
    </source>
</evidence>
<evidence type="ECO:0000269" key="9">
    <source>
    </source>
</evidence>
<evidence type="ECO:0000303" key="10">
    <source>
    </source>
</evidence>
<evidence type="ECO:0000305" key="11"/>
<evidence type="ECO:0000312" key="12">
    <source>
        <dbReference type="Araport" id="AT4G11320"/>
    </source>
</evidence>
<evidence type="ECO:0000312" key="13">
    <source>
        <dbReference type="EMBL" id="CAB51416.1"/>
    </source>
</evidence>
<name>RDL5_ARATH</name>
<feature type="signal peptide" evidence="4">
    <location>
        <begin position="1"/>
        <end position="23"/>
    </location>
</feature>
<feature type="propeptide" id="PRO_0000026465" description="Activation peptide" evidence="1">
    <location>
        <begin position="24"/>
        <end position="143"/>
    </location>
</feature>
<feature type="chain" id="PRO_0000026466" description="Probable cysteine protease RDL5">
    <location>
        <begin position="144"/>
        <end position="371"/>
    </location>
</feature>
<feature type="active site" evidence="6">
    <location>
        <position position="168"/>
    </location>
</feature>
<feature type="active site" evidence="7">
    <location>
        <position position="304"/>
    </location>
</feature>
<feature type="active site" evidence="8">
    <location>
        <position position="324"/>
    </location>
</feature>
<feature type="glycosylation site" description="N-linked (GlcNAc...) asparagine" evidence="5">
    <location>
        <position position="94"/>
    </location>
</feature>
<feature type="disulfide bond" evidence="3">
    <location>
        <begin position="165"/>
        <end position="206"/>
    </location>
</feature>
<feature type="disulfide bond" evidence="3">
    <location>
        <begin position="199"/>
        <end position="239"/>
    </location>
</feature>
<feature type="disulfide bond" evidence="3">
    <location>
        <begin position="298"/>
        <end position="349"/>
    </location>
</feature>
<accession>Q9SUS9</accession>
<organism>
    <name type="scientific">Arabidopsis thaliana</name>
    <name type="common">Mouse-ear cress</name>
    <dbReference type="NCBI Taxonomy" id="3702"/>
    <lineage>
        <taxon>Eukaryota</taxon>
        <taxon>Viridiplantae</taxon>
        <taxon>Streptophyta</taxon>
        <taxon>Embryophyta</taxon>
        <taxon>Tracheophyta</taxon>
        <taxon>Spermatophyta</taxon>
        <taxon>Magnoliopsida</taxon>
        <taxon>eudicotyledons</taxon>
        <taxon>Gunneridae</taxon>
        <taxon>Pentapetalae</taxon>
        <taxon>rosids</taxon>
        <taxon>malvids</taxon>
        <taxon>Brassicales</taxon>
        <taxon>Brassicaceae</taxon>
        <taxon>Camelineae</taxon>
        <taxon>Arabidopsis</taxon>
    </lineage>
</organism>
<protein>
    <recommendedName>
        <fullName evidence="11">Probable cysteine protease RDL5</fullName>
        <ecNumber evidence="2">3.4.22.-</ecNumber>
    </recommendedName>
    <alternativeName>
        <fullName evidence="10">Cysteine protease 2</fullName>
        <shortName evidence="10">AtCP2</shortName>
    </alternativeName>
    <alternativeName>
        <fullName evidence="11">Probable cysteine proteinase At4g11320</fullName>
    </alternativeName>
    <alternativeName>
        <fullName evidence="11">RD21A-like protease 5</fullName>
    </alternativeName>
</protein>
<gene>
    <name evidence="11" type="primary">RDL5</name>
    <name evidence="10" type="synonym">CP2</name>
    <name evidence="12" type="ordered locus">At4g11320</name>
    <name evidence="13" type="ORF">F8L21.110</name>
</gene>
<dbReference type="EC" id="3.4.22.-" evidence="2"/>
<dbReference type="EMBL" id="AL096882">
    <property type="protein sequence ID" value="CAB51416.1"/>
    <property type="molecule type" value="Genomic_DNA"/>
</dbReference>
<dbReference type="EMBL" id="AL161531">
    <property type="protein sequence ID" value="CAB81233.1"/>
    <property type="molecule type" value="Genomic_DNA"/>
</dbReference>
<dbReference type="EMBL" id="CP002687">
    <property type="protein sequence ID" value="AEE82996.1"/>
    <property type="molecule type" value="Genomic_DNA"/>
</dbReference>
<dbReference type="EMBL" id="CP002687">
    <property type="protein sequence ID" value="ANM66783.1"/>
    <property type="molecule type" value="Genomic_DNA"/>
</dbReference>
<dbReference type="EMBL" id="AY035055">
    <property type="protein sequence ID" value="AAK59560.1"/>
    <property type="molecule type" value="mRNA"/>
</dbReference>
<dbReference type="EMBL" id="AY051062">
    <property type="protein sequence ID" value="AAK93739.1"/>
    <property type="molecule type" value="mRNA"/>
</dbReference>
<dbReference type="PIR" id="T13023">
    <property type="entry name" value="T13023"/>
</dbReference>
<dbReference type="RefSeq" id="NP_001328659.1">
    <property type="nucleotide sequence ID" value="NM_001340705.1"/>
</dbReference>
<dbReference type="RefSeq" id="NP_567377.1">
    <property type="nucleotide sequence ID" value="NM_117203.4"/>
</dbReference>
<dbReference type="SMR" id="Q9SUS9"/>
<dbReference type="FunCoup" id="Q9SUS9">
    <property type="interactions" value="292"/>
</dbReference>
<dbReference type="STRING" id="3702.Q9SUS9"/>
<dbReference type="MEROPS" id="C01.A21"/>
<dbReference type="GlyCosmos" id="Q9SUS9">
    <property type="glycosylation" value="1 site, No reported glycans"/>
</dbReference>
<dbReference type="GlyGen" id="Q9SUS9">
    <property type="glycosylation" value="1 site"/>
</dbReference>
<dbReference type="PaxDb" id="3702-AT4G11320.1"/>
<dbReference type="ProteomicsDB" id="235011"/>
<dbReference type="EnsemblPlants" id="AT4G11320.1">
    <property type="protein sequence ID" value="AT4G11320.1"/>
    <property type="gene ID" value="AT4G11320"/>
</dbReference>
<dbReference type="EnsemblPlants" id="AT4G11320.2">
    <property type="protein sequence ID" value="AT4G11320.2"/>
    <property type="gene ID" value="AT4G11320"/>
</dbReference>
<dbReference type="GeneID" id="826734"/>
<dbReference type="Gramene" id="AT4G11320.1">
    <property type="protein sequence ID" value="AT4G11320.1"/>
    <property type="gene ID" value="AT4G11320"/>
</dbReference>
<dbReference type="Gramene" id="AT4G11320.2">
    <property type="protein sequence ID" value="AT4G11320.2"/>
    <property type="gene ID" value="AT4G11320"/>
</dbReference>
<dbReference type="KEGG" id="ath:AT4G11320"/>
<dbReference type="Araport" id="AT4G11320"/>
<dbReference type="TAIR" id="AT4G11320">
    <property type="gene designation" value="CP2"/>
</dbReference>
<dbReference type="eggNOG" id="KOG1543">
    <property type="taxonomic scope" value="Eukaryota"/>
</dbReference>
<dbReference type="HOGENOM" id="CLU_012184_1_0_1"/>
<dbReference type="InParanoid" id="Q9SUS9"/>
<dbReference type="OMA" id="HEYTELC"/>
<dbReference type="PhylomeDB" id="Q9SUS9"/>
<dbReference type="PRO" id="PR:Q9SUS9"/>
<dbReference type="Proteomes" id="UP000006548">
    <property type="component" value="Chromosome 4"/>
</dbReference>
<dbReference type="ExpressionAtlas" id="Q9SUS9">
    <property type="expression patterns" value="baseline and differential"/>
</dbReference>
<dbReference type="GO" id="GO:0008234">
    <property type="term" value="F:cysteine-type peptidase activity"/>
    <property type="evidence" value="ECO:0007669"/>
    <property type="project" value="UniProtKB-KW"/>
</dbReference>
<dbReference type="GO" id="GO:0008233">
    <property type="term" value="F:peptidase activity"/>
    <property type="evidence" value="ECO:0000314"/>
    <property type="project" value="UniProtKB"/>
</dbReference>
<dbReference type="GO" id="GO:0006508">
    <property type="term" value="P:proteolysis"/>
    <property type="evidence" value="ECO:0007669"/>
    <property type="project" value="UniProtKB-KW"/>
</dbReference>
<dbReference type="CDD" id="cd02248">
    <property type="entry name" value="Peptidase_C1A"/>
    <property type="match status" value="1"/>
</dbReference>
<dbReference type="FunFam" id="3.90.70.10:FF:000067">
    <property type="entry name" value="Senescence-specific cysteine protease"/>
    <property type="match status" value="1"/>
</dbReference>
<dbReference type="Gene3D" id="3.90.70.10">
    <property type="entry name" value="Cysteine proteinases"/>
    <property type="match status" value="1"/>
</dbReference>
<dbReference type="InterPro" id="IPR038765">
    <property type="entry name" value="Papain-like_cys_pep_sf"/>
</dbReference>
<dbReference type="InterPro" id="IPR025660">
    <property type="entry name" value="Pept_his_AS"/>
</dbReference>
<dbReference type="InterPro" id="IPR013128">
    <property type="entry name" value="Peptidase_C1A"/>
</dbReference>
<dbReference type="InterPro" id="IPR000668">
    <property type="entry name" value="Peptidase_C1A_C"/>
</dbReference>
<dbReference type="InterPro" id="IPR039417">
    <property type="entry name" value="Peptidase_C1A_papain-like"/>
</dbReference>
<dbReference type="InterPro" id="IPR013201">
    <property type="entry name" value="Prot_inhib_I29"/>
</dbReference>
<dbReference type="PANTHER" id="PTHR12411">
    <property type="entry name" value="CYSTEINE PROTEASE FAMILY C1-RELATED"/>
    <property type="match status" value="1"/>
</dbReference>
<dbReference type="Pfam" id="PF08246">
    <property type="entry name" value="Inhibitor_I29"/>
    <property type="match status" value="1"/>
</dbReference>
<dbReference type="Pfam" id="PF00112">
    <property type="entry name" value="Peptidase_C1"/>
    <property type="match status" value="1"/>
</dbReference>
<dbReference type="PRINTS" id="PR00705">
    <property type="entry name" value="PAPAIN"/>
</dbReference>
<dbReference type="SMART" id="SM00848">
    <property type="entry name" value="Inhibitor_I29"/>
    <property type="match status" value="1"/>
</dbReference>
<dbReference type="SMART" id="SM00645">
    <property type="entry name" value="Pept_C1"/>
    <property type="match status" value="1"/>
</dbReference>
<dbReference type="SUPFAM" id="SSF54001">
    <property type="entry name" value="Cysteine proteinases"/>
    <property type="match status" value="1"/>
</dbReference>
<dbReference type="PROSITE" id="PS00639">
    <property type="entry name" value="THIOL_PROTEASE_HIS"/>
    <property type="match status" value="1"/>
</dbReference>
<sequence length="371" mass="40711">MGYAKSAMLIFLLALVIASCATAMDMSVVSSNDNHHVTAGPGRRQGIFDAEATLMFESWMVKHGKVYDSVAEKERRLTIFEDNLRFITNRNAENLSYRLGLNRFADLSLHEYGEICHGADPRPPRNHVFMTSSNRYKTSDGDVLPKSVDWRNEGAVTEVKDQGLCRSCWAFSTVGAVEGLNKIVTGELVTLSEQDLINCNKENNGCGGGKVETAYEFIMNNGGLGTDNDYPYKALNGVCEGRLKEDNKNVMIDGYENLPANDEAALMKAVAHQPVTAVVDSSSREFQLYESGVFDGTCGTNLNHGVVVVGYGTENGRDYWIVKNSRGDTWGEAGYMKMARNIANPRGLCGIAMRASYPLKNSFSTDKVSVA</sequence>
<reference key="1">
    <citation type="journal article" date="1999" name="Nature">
        <title>Sequence and analysis of chromosome 4 of the plant Arabidopsis thaliana.</title>
        <authorList>
            <person name="Mayer K.F.X."/>
            <person name="Schueller C."/>
            <person name="Wambutt R."/>
            <person name="Murphy G."/>
            <person name="Volckaert G."/>
            <person name="Pohl T."/>
            <person name="Duesterhoeft A."/>
            <person name="Stiekema W."/>
            <person name="Entian K.-D."/>
            <person name="Terryn N."/>
            <person name="Harris B."/>
            <person name="Ansorge W."/>
            <person name="Brandt P."/>
            <person name="Grivell L.A."/>
            <person name="Rieger M."/>
            <person name="Weichselgartner M."/>
            <person name="de Simone V."/>
            <person name="Obermaier B."/>
            <person name="Mache R."/>
            <person name="Mueller M."/>
            <person name="Kreis M."/>
            <person name="Delseny M."/>
            <person name="Puigdomenech P."/>
            <person name="Watson M."/>
            <person name="Schmidtheini T."/>
            <person name="Reichert B."/>
            <person name="Portetelle D."/>
            <person name="Perez-Alonso M."/>
            <person name="Boutry M."/>
            <person name="Bancroft I."/>
            <person name="Vos P."/>
            <person name="Hoheisel J."/>
            <person name="Zimmermann W."/>
            <person name="Wedler H."/>
            <person name="Ridley P."/>
            <person name="Langham S.-A."/>
            <person name="McCullagh B."/>
            <person name="Bilham L."/>
            <person name="Robben J."/>
            <person name="van der Schueren J."/>
            <person name="Grymonprez B."/>
            <person name="Chuang Y.-J."/>
            <person name="Vandenbussche F."/>
            <person name="Braeken M."/>
            <person name="Weltjens I."/>
            <person name="Voet M."/>
            <person name="Bastiaens I."/>
            <person name="Aert R."/>
            <person name="Defoor E."/>
            <person name="Weitzenegger T."/>
            <person name="Bothe G."/>
            <person name="Ramsperger U."/>
            <person name="Hilbert H."/>
            <person name="Braun M."/>
            <person name="Holzer E."/>
            <person name="Brandt A."/>
            <person name="Peters S."/>
            <person name="van Staveren M."/>
            <person name="Dirkse W."/>
            <person name="Mooijman P."/>
            <person name="Klein Lankhorst R."/>
            <person name="Rose M."/>
            <person name="Hauf J."/>
            <person name="Koetter P."/>
            <person name="Berneiser S."/>
            <person name="Hempel S."/>
            <person name="Feldpausch M."/>
            <person name="Lamberth S."/>
            <person name="Van den Daele H."/>
            <person name="De Keyser A."/>
            <person name="Buysshaert C."/>
            <person name="Gielen J."/>
            <person name="Villarroel R."/>
            <person name="De Clercq R."/>
            <person name="van Montagu M."/>
            <person name="Rogers J."/>
            <person name="Cronin A."/>
            <person name="Quail M.A."/>
            <person name="Bray-Allen S."/>
            <person name="Clark L."/>
            <person name="Doggett J."/>
            <person name="Hall S."/>
            <person name="Kay M."/>
            <person name="Lennard N."/>
            <person name="McLay K."/>
            <person name="Mayes R."/>
            <person name="Pettett A."/>
            <person name="Rajandream M.A."/>
            <person name="Lyne M."/>
            <person name="Benes V."/>
            <person name="Rechmann S."/>
            <person name="Borkova D."/>
            <person name="Bloecker H."/>
            <person name="Scharfe M."/>
            <person name="Grimm M."/>
            <person name="Loehnert T.-H."/>
            <person name="Dose S."/>
            <person name="de Haan M."/>
            <person name="Maarse A.C."/>
            <person name="Schaefer M."/>
            <person name="Mueller-Auer S."/>
            <person name="Gabel C."/>
            <person name="Fuchs M."/>
            <person name="Fartmann B."/>
            <person name="Granderath K."/>
            <person name="Dauner D."/>
            <person name="Herzl A."/>
            <person name="Neumann S."/>
            <person name="Argiriou A."/>
            <person name="Vitale D."/>
            <person name="Liguori R."/>
            <person name="Piravandi E."/>
            <person name="Massenet O."/>
            <person name="Quigley F."/>
            <person name="Clabauld G."/>
            <person name="Muendlein A."/>
            <person name="Felber R."/>
            <person name="Schnabl S."/>
            <person name="Hiller R."/>
            <person name="Schmidt W."/>
            <person name="Lecharny A."/>
            <person name="Aubourg S."/>
            <person name="Chefdor F."/>
            <person name="Cooke R."/>
            <person name="Berger C."/>
            <person name="Monfort A."/>
            <person name="Casacuberta E."/>
            <person name="Gibbons T."/>
            <person name="Weber N."/>
            <person name="Vandenbol M."/>
            <person name="Bargues M."/>
            <person name="Terol J."/>
            <person name="Torres A."/>
            <person name="Perez-Perez A."/>
            <person name="Purnelle B."/>
            <person name="Bent E."/>
            <person name="Johnson S."/>
            <person name="Tacon D."/>
            <person name="Jesse T."/>
            <person name="Heijnen L."/>
            <person name="Schwarz S."/>
            <person name="Scholler P."/>
            <person name="Heber S."/>
            <person name="Francs P."/>
            <person name="Bielke C."/>
            <person name="Frishman D."/>
            <person name="Haase D."/>
            <person name="Lemcke K."/>
            <person name="Mewes H.-W."/>
            <person name="Stocker S."/>
            <person name="Zaccaria P."/>
            <person name="Bevan M."/>
            <person name="Wilson R.K."/>
            <person name="de la Bastide M."/>
            <person name="Habermann K."/>
            <person name="Parnell L."/>
            <person name="Dedhia N."/>
            <person name="Gnoj L."/>
            <person name="Schutz K."/>
            <person name="Huang E."/>
            <person name="Spiegel L."/>
            <person name="Sekhon M."/>
            <person name="Murray J."/>
            <person name="Sheet P."/>
            <person name="Cordes M."/>
            <person name="Abu-Threideh J."/>
            <person name="Stoneking T."/>
            <person name="Kalicki J."/>
            <person name="Graves T."/>
            <person name="Harmon G."/>
            <person name="Edwards J."/>
            <person name="Latreille P."/>
            <person name="Courtney L."/>
            <person name="Cloud J."/>
            <person name="Abbott A."/>
            <person name="Scott K."/>
            <person name="Johnson D."/>
            <person name="Minx P."/>
            <person name="Bentley D."/>
            <person name="Fulton B."/>
            <person name="Miller N."/>
            <person name="Greco T."/>
            <person name="Kemp K."/>
            <person name="Kramer J."/>
            <person name="Fulton L."/>
            <person name="Mardis E."/>
            <person name="Dante M."/>
            <person name="Pepin K."/>
            <person name="Hillier L.W."/>
            <person name="Nelson J."/>
            <person name="Spieth J."/>
            <person name="Ryan E."/>
            <person name="Andrews S."/>
            <person name="Geisel C."/>
            <person name="Layman D."/>
            <person name="Du H."/>
            <person name="Ali J."/>
            <person name="Berghoff A."/>
            <person name="Jones K."/>
            <person name="Drone K."/>
            <person name="Cotton M."/>
            <person name="Joshu C."/>
            <person name="Antonoiu B."/>
            <person name="Zidanic M."/>
            <person name="Strong C."/>
            <person name="Sun H."/>
            <person name="Lamar B."/>
            <person name="Yordan C."/>
            <person name="Ma P."/>
            <person name="Zhong J."/>
            <person name="Preston R."/>
            <person name="Vil D."/>
            <person name="Shekher M."/>
            <person name="Matero A."/>
            <person name="Shah R."/>
            <person name="Swaby I.K."/>
            <person name="O'Shaughnessy A."/>
            <person name="Rodriguez M."/>
            <person name="Hoffman J."/>
            <person name="Till S."/>
            <person name="Granat S."/>
            <person name="Shohdy N."/>
            <person name="Hasegawa A."/>
            <person name="Hameed A."/>
            <person name="Lodhi M."/>
            <person name="Johnson A."/>
            <person name="Chen E."/>
            <person name="Marra M.A."/>
            <person name="Martienssen R."/>
            <person name="McCombie W.R."/>
        </authorList>
    </citation>
    <scope>NUCLEOTIDE SEQUENCE [LARGE SCALE GENOMIC DNA]</scope>
    <source>
        <strain>cv. Columbia</strain>
    </source>
</reference>
<reference key="2">
    <citation type="journal article" date="2017" name="Plant J.">
        <title>Araport11: a complete reannotation of the Arabidopsis thaliana reference genome.</title>
        <authorList>
            <person name="Cheng C.Y."/>
            <person name="Krishnakumar V."/>
            <person name="Chan A.P."/>
            <person name="Thibaud-Nissen F."/>
            <person name="Schobel S."/>
            <person name="Town C.D."/>
        </authorList>
    </citation>
    <scope>GENOME REANNOTATION</scope>
    <source>
        <strain>cv. Columbia</strain>
    </source>
</reference>
<reference key="3">
    <citation type="journal article" date="2003" name="Science">
        <title>Empirical analysis of transcriptional activity in the Arabidopsis genome.</title>
        <authorList>
            <person name="Yamada K."/>
            <person name="Lim J."/>
            <person name="Dale J.M."/>
            <person name="Chen H."/>
            <person name="Shinn P."/>
            <person name="Palm C.J."/>
            <person name="Southwick A.M."/>
            <person name="Wu H.C."/>
            <person name="Kim C.J."/>
            <person name="Nguyen M."/>
            <person name="Pham P.K."/>
            <person name="Cheuk R.F."/>
            <person name="Karlin-Newmann G."/>
            <person name="Liu S.X."/>
            <person name="Lam B."/>
            <person name="Sakano H."/>
            <person name="Wu T."/>
            <person name="Yu G."/>
            <person name="Miranda M."/>
            <person name="Quach H.L."/>
            <person name="Tripp M."/>
            <person name="Chang C.H."/>
            <person name="Lee J.M."/>
            <person name="Toriumi M.J."/>
            <person name="Chan M.M."/>
            <person name="Tang C.C."/>
            <person name="Onodera C.S."/>
            <person name="Deng J.M."/>
            <person name="Akiyama K."/>
            <person name="Ansari Y."/>
            <person name="Arakawa T."/>
            <person name="Banh J."/>
            <person name="Banno F."/>
            <person name="Bowser L."/>
            <person name="Brooks S.Y."/>
            <person name="Carninci P."/>
            <person name="Chao Q."/>
            <person name="Choy N."/>
            <person name="Enju A."/>
            <person name="Goldsmith A.D."/>
            <person name="Gurjal M."/>
            <person name="Hansen N.F."/>
            <person name="Hayashizaki Y."/>
            <person name="Johnson-Hopson C."/>
            <person name="Hsuan V.W."/>
            <person name="Iida K."/>
            <person name="Karnes M."/>
            <person name="Khan S."/>
            <person name="Koesema E."/>
            <person name="Ishida J."/>
            <person name="Jiang P.X."/>
            <person name="Jones T."/>
            <person name="Kawai J."/>
            <person name="Kamiya A."/>
            <person name="Meyers C."/>
            <person name="Nakajima M."/>
            <person name="Narusaka M."/>
            <person name="Seki M."/>
            <person name="Sakurai T."/>
            <person name="Satou M."/>
            <person name="Tamse R."/>
            <person name="Vaysberg M."/>
            <person name="Wallender E.K."/>
            <person name="Wong C."/>
            <person name="Yamamura Y."/>
            <person name="Yuan S."/>
            <person name="Shinozaki K."/>
            <person name="Davis R.W."/>
            <person name="Theologis A."/>
            <person name="Ecker J.R."/>
        </authorList>
    </citation>
    <scope>NUCLEOTIDE SEQUENCE [LARGE SCALE MRNA]</scope>
    <source>
        <strain>cv. Columbia</strain>
    </source>
</reference>
<reference key="4">
    <citation type="journal article" date="2013" name="Plant Mol. Biol.">
        <title>Cysteine protease enhances plant-mediated bollworm RNA interference.</title>
        <authorList>
            <person name="Mao Y.B."/>
            <person name="Xue X.Y."/>
            <person name="Tao X.Y."/>
            <person name="Yang C.Q."/>
            <person name="Wang L.J."/>
            <person name="Chen X.Y."/>
        </authorList>
    </citation>
    <scope>FUNCTION</scope>
    <scope>TISSUE SPECIFICITY</scope>
    <scope>INDUCTION BY WOUNDING</scope>
</reference>
<comment type="function">
    <text evidence="9">Possesses protease activity in vitro.</text>
</comment>
<comment type="tissue specificity">
    <text evidence="9">Expressed in roots, inflorescences and siliques.</text>
</comment>
<comment type="induction">
    <text evidence="9">By wounding.</text>
</comment>
<comment type="similarity">
    <text evidence="7">Belongs to the peptidase C1 family.</text>
</comment>
<proteinExistence type="evidence at transcript level"/>
<keyword id="KW-1015">Disulfide bond</keyword>
<keyword id="KW-0325">Glycoprotein</keyword>
<keyword id="KW-0378">Hydrolase</keyword>
<keyword id="KW-0645">Protease</keyword>
<keyword id="KW-1185">Reference proteome</keyword>
<keyword id="KW-0732">Signal</keyword>
<keyword id="KW-0788">Thiol protease</keyword>
<keyword id="KW-0865">Zymogen</keyword>